<sequence>AVAKLLAAADVTAALEGCKADDSFNHKVFFQKTGLAKKSNEELEAIFKILDQDKSGFIEDEELELFLQNFSAGARTLTKTETETFLKAGDSDGDGKIGVDEFQKLVKA</sequence>
<reference key="1">
    <citation type="journal article" date="1978" name="Biochim. Biophys. Acta">
        <title>Parvalbumins from coelacanth muscle. III. Amino acid sequence of the major component.</title>
        <authorList>
            <person name="Jauregui-Adell J."/>
            <person name="Pechere J.-F."/>
        </authorList>
    </citation>
    <scope>PROTEIN SEQUENCE</scope>
    <scope>ACETYLATION AT ALA-1</scope>
</reference>
<name>PRVB_LATCH</name>
<protein>
    <recommendedName>
        <fullName>Parvalbumin beta</fullName>
    </recommendedName>
</protein>
<comment type="function">
    <text evidence="1">In muscle, parvalbumin is thought to be involved in relaxation after contraction. It binds two calcium ions (By similarity).</text>
</comment>
<comment type="miscellaneous">
    <text>This is the predominant parvalbumin in latimeria muscle.</text>
</comment>
<comment type="miscellaneous">
    <text>This parvalbumin has an isoelectric point of 4.52.</text>
</comment>
<comment type="similarity">
    <text evidence="5">Belongs to the parvalbumin family.</text>
</comment>
<accession>P02623</accession>
<evidence type="ECO:0000250" key="1"/>
<evidence type="ECO:0000250" key="2">
    <source>
        <dbReference type="UniProtKB" id="P02621"/>
    </source>
</evidence>
<evidence type="ECO:0000255" key="3">
    <source>
        <dbReference type="PROSITE-ProRule" id="PRU00448"/>
    </source>
</evidence>
<evidence type="ECO:0000269" key="4">
    <source>
    </source>
</evidence>
<evidence type="ECO:0000305" key="5"/>
<keyword id="KW-0007">Acetylation</keyword>
<keyword id="KW-0106">Calcium</keyword>
<keyword id="KW-0903">Direct protein sequencing</keyword>
<keyword id="KW-0479">Metal-binding</keyword>
<keyword id="KW-0514">Muscle protein</keyword>
<keyword id="KW-1185">Reference proteome</keyword>
<keyword id="KW-0677">Repeat</keyword>
<feature type="chain" id="PRO_0000073611" description="Parvalbumin beta">
    <location>
        <begin position="1"/>
        <end position="108"/>
    </location>
</feature>
<feature type="domain" description="EF-hand 1" evidence="3">
    <location>
        <begin position="38"/>
        <end position="73"/>
    </location>
</feature>
<feature type="domain" description="EF-hand 2" evidence="3">
    <location>
        <begin position="77"/>
        <end position="108"/>
    </location>
</feature>
<feature type="binding site" evidence="2 3">
    <location>
        <position position="51"/>
    </location>
    <ligand>
        <name>Ca(2+)</name>
        <dbReference type="ChEBI" id="CHEBI:29108"/>
        <label>1</label>
    </ligand>
</feature>
<feature type="binding site" evidence="2 3">
    <location>
        <position position="53"/>
    </location>
    <ligand>
        <name>Ca(2+)</name>
        <dbReference type="ChEBI" id="CHEBI:29108"/>
        <label>1</label>
    </ligand>
</feature>
<feature type="binding site" evidence="2 3">
    <location>
        <position position="55"/>
    </location>
    <ligand>
        <name>Ca(2+)</name>
        <dbReference type="ChEBI" id="CHEBI:29108"/>
        <label>1</label>
    </ligand>
</feature>
<feature type="binding site" evidence="2">
    <location>
        <position position="57"/>
    </location>
    <ligand>
        <name>Ca(2+)</name>
        <dbReference type="ChEBI" id="CHEBI:29108"/>
        <label>1</label>
    </ligand>
</feature>
<feature type="binding site" evidence="2">
    <location>
        <position position="59"/>
    </location>
    <ligand>
        <name>Ca(2+)</name>
        <dbReference type="ChEBI" id="CHEBI:29108"/>
        <label>1</label>
    </ligand>
</feature>
<feature type="binding site" evidence="2 3">
    <location>
        <position position="62"/>
    </location>
    <ligand>
        <name>Ca(2+)</name>
        <dbReference type="ChEBI" id="CHEBI:29108"/>
        <label>1</label>
    </ligand>
</feature>
<feature type="binding site" evidence="2 3">
    <location>
        <position position="90"/>
    </location>
    <ligand>
        <name>Ca(2+)</name>
        <dbReference type="ChEBI" id="CHEBI:29108"/>
        <label>2</label>
    </ligand>
</feature>
<feature type="binding site" evidence="2 3">
    <location>
        <position position="92"/>
    </location>
    <ligand>
        <name>Ca(2+)</name>
        <dbReference type="ChEBI" id="CHEBI:29108"/>
        <label>2</label>
    </ligand>
</feature>
<feature type="binding site" evidence="2 3">
    <location>
        <position position="94"/>
    </location>
    <ligand>
        <name>Ca(2+)</name>
        <dbReference type="ChEBI" id="CHEBI:29108"/>
        <label>2</label>
    </ligand>
</feature>
<feature type="binding site" evidence="3">
    <location>
        <position position="96"/>
    </location>
    <ligand>
        <name>Ca(2+)</name>
        <dbReference type="ChEBI" id="CHEBI:29108"/>
        <label>2</label>
    </ligand>
</feature>
<feature type="binding site" evidence="2 3">
    <location>
        <position position="101"/>
    </location>
    <ligand>
        <name>Ca(2+)</name>
        <dbReference type="ChEBI" id="CHEBI:29108"/>
        <label>2</label>
    </ligand>
</feature>
<feature type="modified residue" description="N-acetylalanine" evidence="4">
    <location>
        <position position="1"/>
    </location>
</feature>
<organism>
    <name type="scientific">Latimeria chalumnae</name>
    <name type="common">Coelacanth</name>
    <dbReference type="NCBI Taxonomy" id="7897"/>
    <lineage>
        <taxon>Eukaryota</taxon>
        <taxon>Metazoa</taxon>
        <taxon>Chordata</taxon>
        <taxon>Craniata</taxon>
        <taxon>Vertebrata</taxon>
        <taxon>Euteleostomi</taxon>
        <taxon>Coelacanthiformes</taxon>
        <taxon>Coelacanthidae</taxon>
        <taxon>Latimeria</taxon>
    </lineage>
</organism>
<dbReference type="PIR" id="A03058">
    <property type="entry name" value="PVLAB"/>
</dbReference>
<dbReference type="SMR" id="P02623"/>
<dbReference type="FunCoup" id="P02623">
    <property type="interactions" value="23"/>
</dbReference>
<dbReference type="STRING" id="7897.ENSLACP00000003476"/>
<dbReference type="iPTMnet" id="P02623"/>
<dbReference type="eggNOG" id="KOG0027">
    <property type="taxonomic scope" value="Eukaryota"/>
</dbReference>
<dbReference type="InParanoid" id="P02623"/>
<dbReference type="Proteomes" id="UP000008672">
    <property type="component" value="Unassembled WGS sequence"/>
</dbReference>
<dbReference type="GO" id="GO:0005737">
    <property type="term" value="C:cytoplasm"/>
    <property type="evidence" value="ECO:0007669"/>
    <property type="project" value="TreeGrafter"/>
</dbReference>
<dbReference type="GO" id="GO:0005509">
    <property type="term" value="F:calcium ion binding"/>
    <property type="evidence" value="ECO:0007669"/>
    <property type="project" value="InterPro"/>
</dbReference>
<dbReference type="CDD" id="cd16255">
    <property type="entry name" value="EFh_parvalbumin_beta"/>
    <property type="match status" value="1"/>
</dbReference>
<dbReference type="FunFam" id="1.10.238.10:FF:000060">
    <property type="entry name" value="Parvalbumin, thymic"/>
    <property type="match status" value="1"/>
</dbReference>
<dbReference type="Gene3D" id="1.10.238.10">
    <property type="entry name" value="EF-hand"/>
    <property type="match status" value="1"/>
</dbReference>
<dbReference type="InterPro" id="IPR011992">
    <property type="entry name" value="EF-hand-dom_pair"/>
</dbReference>
<dbReference type="InterPro" id="IPR018247">
    <property type="entry name" value="EF_Hand_1_Ca_BS"/>
</dbReference>
<dbReference type="InterPro" id="IPR002048">
    <property type="entry name" value="EF_hand_dom"/>
</dbReference>
<dbReference type="InterPro" id="IPR008080">
    <property type="entry name" value="Parvalbumin"/>
</dbReference>
<dbReference type="PANTHER" id="PTHR11653:SF12">
    <property type="entry name" value="PARVALBUMIN"/>
    <property type="match status" value="1"/>
</dbReference>
<dbReference type="PANTHER" id="PTHR11653">
    <property type="entry name" value="PARVALBUMIN ALPHA"/>
    <property type="match status" value="1"/>
</dbReference>
<dbReference type="Pfam" id="PF13499">
    <property type="entry name" value="EF-hand_7"/>
    <property type="match status" value="1"/>
</dbReference>
<dbReference type="PRINTS" id="PR01697">
    <property type="entry name" value="PARVALBUMIN"/>
</dbReference>
<dbReference type="SMART" id="SM00054">
    <property type="entry name" value="EFh"/>
    <property type="match status" value="2"/>
</dbReference>
<dbReference type="SUPFAM" id="SSF47473">
    <property type="entry name" value="EF-hand"/>
    <property type="match status" value="1"/>
</dbReference>
<dbReference type="PROSITE" id="PS00018">
    <property type="entry name" value="EF_HAND_1"/>
    <property type="match status" value="2"/>
</dbReference>
<dbReference type="PROSITE" id="PS50222">
    <property type="entry name" value="EF_HAND_2"/>
    <property type="match status" value="2"/>
</dbReference>
<proteinExistence type="evidence at protein level"/>